<accession>Q8CID3</accession>
<dbReference type="EMBL" id="BC029169">
    <property type="protein sequence ID" value="AAH29169.1"/>
    <property type="molecule type" value="mRNA"/>
</dbReference>
<dbReference type="CCDS" id="CCDS25584.1"/>
<dbReference type="RefSeq" id="NP_722477.1">
    <property type="nucleotide sequence ID" value="NM_153782.2"/>
</dbReference>
<dbReference type="SMR" id="Q8CID3"/>
<dbReference type="FunCoup" id="Q8CID3">
    <property type="interactions" value="283"/>
</dbReference>
<dbReference type="IntAct" id="Q8CID3">
    <property type="interactions" value="1"/>
</dbReference>
<dbReference type="STRING" id="10090.ENSMUSP00000020938"/>
<dbReference type="GlyCosmos" id="Q8CID3">
    <property type="glycosylation" value="5 sites, No reported glycans"/>
</dbReference>
<dbReference type="GlyGen" id="Q8CID3">
    <property type="glycosylation" value="6 sites, 2 N-linked glycans (2 sites)"/>
</dbReference>
<dbReference type="iPTMnet" id="Q8CID3"/>
<dbReference type="PhosphoSitePlus" id="Q8CID3"/>
<dbReference type="jPOST" id="Q8CID3"/>
<dbReference type="PaxDb" id="10090-ENSMUSP00000020938"/>
<dbReference type="PeptideAtlas" id="Q8CID3"/>
<dbReference type="ProteomicsDB" id="275833"/>
<dbReference type="Antibodypedia" id="31793">
    <property type="antibodies" value="110 antibodies from 22 providers"/>
</dbReference>
<dbReference type="DNASU" id="208659"/>
<dbReference type="Ensembl" id="ENSMUST00000020938.8">
    <property type="protein sequence ID" value="ENSMUSP00000020938.8"/>
    <property type="gene ID" value="ENSMUSG00000020614.14"/>
</dbReference>
<dbReference type="Ensembl" id="ENSMUST00000155559.8">
    <property type="protein sequence ID" value="ENSMUSP00000116687.2"/>
    <property type="gene ID" value="ENSMUSG00000020614.14"/>
</dbReference>
<dbReference type="GeneID" id="208659"/>
<dbReference type="KEGG" id="mmu:208659"/>
<dbReference type="UCSC" id="uc007mcw.1">
    <property type="organism name" value="mouse"/>
</dbReference>
<dbReference type="AGR" id="MGI:2388266"/>
<dbReference type="CTD" id="54757"/>
<dbReference type="MGI" id="MGI:2388266">
    <property type="gene designation" value="Fam20a"/>
</dbReference>
<dbReference type="VEuPathDB" id="HostDB:ENSMUSG00000020614"/>
<dbReference type="eggNOG" id="KOG3829">
    <property type="taxonomic scope" value="Eukaryota"/>
</dbReference>
<dbReference type="GeneTree" id="ENSGT00950000182951"/>
<dbReference type="HOGENOM" id="CLU_028926_2_0_1"/>
<dbReference type="InParanoid" id="Q8CID3"/>
<dbReference type="OMA" id="PLTQCCI"/>
<dbReference type="OrthoDB" id="8583677at2759"/>
<dbReference type="PhylomeDB" id="Q8CID3"/>
<dbReference type="TreeFam" id="TF313276"/>
<dbReference type="Reactome" id="R-MMU-381426">
    <property type="pathway name" value="Regulation of Insulin-like Growth Factor (IGF) transport and uptake by Insulin-like Growth Factor Binding Proteins (IGFBPs)"/>
</dbReference>
<dbReference type="Reactome" id="R-MMU-8957275">
    <property type="pathway name" value="Post-translational protein phosphorylation"/>
</dbReference>
<dbReference type="BioGRID-ORCS" id="208659">
    <property type="hits" value="7 hits in 77 CRISPR screens"/>
</dbReference>
<dbReference type="ChiTaRS" id="Fam20a">
    <property type="organism name" value="mouse"/>
</dbReference>
<dbReference type="PRO" id="PR:Q8CID3"/>
<dbReference type="Proteomes" id="UP000000589">
    <property type="component" value="Chromosome 11"/>
</dbReference>
<dbReference type="RNAct" id="Q8CID3">
    <property type="molecule type" value="protein"/>
</dbReference>
<dbReference type="Bgee" id="ENSMUSG00000020614">
    <property type="expression patterns" value="Expressed in molar tooth and 113 other cell types or tissues"/>
</dbReference>
<dbReference type="GO" id="GO:0005737">
    <property type="term" value="C:cytoplasm"/>
    <property type="evidence" value="ECO:0000314"/>
    <property type="project" value="UniProtKB"/>
</dbReference>
<dbReference type="GO" id="GO:0005783">
    <property type="term" value="C:endoplasmic reticulum"/>
    <property type="evidence" value="ECO:0000314"/>
    <property type="project" value="UniProtKB"/>
</dbReference>
<dbReference type="GO" id="GO:0005615">
    <property type="term" value="C:extracellular space"/>
    <property type="evidence" value="ECO:0007005"/>
    <property type="project" value="BHF-UCL"/>
</dbReference>
<dbReference type="GO" id="GO:0005794">
    <property type="term" value="C:Golgi apparatus"/>
    <property type="evidence" value="ECO:0000314"/>
    <property type="project" value="UniProtKB"/>
</dbReference>
<dbReference type="GO" id="GO:0043539">
    <property type="term" value="F:protein serine/threonine kinase activator activity"/>
    <property type="evidence" value="ECO:0000250"/>
    <property type="project" value="UniProtKB"/>
</dbReference>
<dbReference type="GO" id="GO:0031214">
    <property type="term" value="P:biomineral tissue development"/>
    <property type="evidence" value="ECO:0000250"/>
    <property type="project" value="UniProtKB"/>
</dbReference>
<dbReference type="GO" id="GO:0055074">
    <property type="term" value="P:calcium ion homeostasis"/>
    <property type="evidence" value="ECO:0007669"/>
    <property type="project" value="Ensembl"/>
</dbReference>
<dbReference type="GO" id="GO:0070166">
    <property type="term" value="P:enamel mineralization"/>
    <property type="evidence" value="ECO:0000315"/>
    <property type="project" value="MGI"/>
</dbReference>
<dbReference type="GO" id="GO:0001934">
    <property type="term" value="P:positive regulation of protein phosphorylation"/>
    <property type="evidence" value="ECO:0000314"/>
    <property type="project" value="UniProtKB"/>
</dbReference>
<dbReference type="GO" id="GO:0009617">
    <property type="term" value="P:response to bacterium"/>
    <property type="evidence" value="ECO:0000270"/>
    <property type="project" value="MGI"/>
</dbReference>
<dbReference type="GO" id="GO:0044691">
    <property type="term" value="P:tooth eruption"/>
    <property type="evidence" value="ECO:0007669"/>
    <property type="project" value="Ensembl"/>
</dbReference>
<dbReference type="InterPro" id="IPR024869">
    <property type="entry name" value="FAM20"/>
</dbReference>
<dbReference type="InterPro" id="IPR009581">
    <property type="entry name" value="FAM20_C"/>
</dbReference>
<dbReference type="PANTHER" id="PTHR12450">
    <property type="entry name" value="DENTIN MATRIX PROTEIN 4 PROTEIN FAM20"/>
    <property type="match status" value="1"/>
</dbReference>
<dbReference type="PANTHER" id="PTHR12450:SF12">
    <property type="entry name" value="PSEUDOKINASE FAM20A"/>
    <property type="match status" value="1"/>
</dbReference>
<dbReference type="Pfam" id="PF06702">
    <property type="entry name" value="Fam20C"/>
    <property type="match status" value="1"/>
</dbReference>
<keyword id="KW-0091">Biomineralization</keyword>
<keyword id="KW-1015">Disulfide bond</keyword>
<keyword id="KW-0256">Endoplasmic reticulum</keyword>
<keyword id="KW-0325">Glycoprotein</keyword>
<keyword id="KW-0333">Golgi apparatus</keyword>
<keyword id="KW-1185">Reference proteome</keyword>
<keyword id="KW-0964">Secreted</keyword>
<keyword id="KW-0732">Signal</keyword>
<comment type="function">
    <text evidence="7">Pseudokinase that acts as an allosteric activator of the Golgi serine/threonine protein kinase FAM20C and is involved in biomineralization of teeth. Forms a complex with FAM20C and increases the ability of FAM20C to phosphorylate the proteins that form the 'matrix' that guides the deposition of the enamel minerals.</text>
</comment>
<comment type="subunit">
    <text evidence="7">Interacts with FAM20C; probably forming a heterotetramer of 2 subunits of FAM20A and 2 subunits of FAM20C.</text>
</comment>
<comment type="subcellular location">
    <subcellularLocation>
        <location evidence="3">Secreted</location>
    </subcellularLocation>
    <subcellularLocation>
        <location evidence="6">Golgi apparatus</location>
    </subcellularLocation>
    <subcellularLocation>
        <location evidence="6">Endoplasmic reticulum</location>
    </subcellularLocation>
</comment>
<comment type="tissue specificity">
    <text evidence="4 5 8">In the mammary gland, expressed at higher levels in lactating mice than in virgin mice (PubMed:29858230). Observed throughout the tissues of the mandibular incisor, including the secretory and maturation stage ameloblasts, the suprabasal layers of the gingival epithelium and the odontoblasts. Weak expression in the enamel matrix.</text>
</comment>
<comment type="developmental stage">
    <text evidence="3">In EML and MPRO cell lines, low levels in undifferentiated cells. Induced during maturation to promyelocyte stage of neutrophil differentiation. Decreased during neutrophil terminal differentiation.</text>
</comment>
<comment type="induction">
    <text evidence="3">By all-trans retinoic acid (atRA) and IL3 in EML cell line.</text>
</comment>
<comment type="PTM">
    <text evidence="3">N-glycosylated.</text>
</comment>
<comment type="disruption phenotype">
    <text evidence="5">Mice survive to adulthood and show biomineralization defects such as severe amelogenesis imperfecta (AI). In addition, mice develop disseminated calcifications of muscular arteries and intrapulmonary calcifications, similar to those of fetuin-A (Ahsg) deficient mice, although they are normocalcemic and normophosphatemic, with normal dentin and bone.</text>
</comment>
<comment type="similarity">
    <text evidence="9">Belongs to the FAM20 family.</text>
</comment>
<evidence type="ECO:0000250" key="1">
    <source>
        <dbReference type="UniProtKB" id="Q9XTW2"/>
    </source>
</evidence>
<evidence type="ECO:0000255" key="2"/>
<evidence type="ECO:0000269" key="3">
    <source>
    </source>
</evidence>
<evidence type="ECO:0000269" key="4">
    <source>
    </source>
</evidence>
<evidence type="ECO:0000269" key="5">
    <source>
    </source>
</evidence>
<evidence type="ECO:0000269" key="6">
    <source>
    </source>
</evidence>
<evidence type="ECO:0000269" key="7">
    <source>
    </source>
</evidence>
<evidence type="ECO:0000269" key="8">
    <source>
    </source>
</evidence>
<evidence type="ECO:0000305" key="9"/>
<evidence type="ECO:0000312" key="10">
    <source>
        <dbReference type="MGI" id="MGI:2388266"/>
    </source>
</evidence>
<proteinExistence type="evidence at protein level"/>
<protein>
    <recommendedName>
        <fullName evidence="9">Pseudokinase FAM20A</fullName>
    </recommendedName>
</protein>
<feature type="signal peptide" evidence="2">
    <location>
        <begin position="1"/>
        <end position="33"/>
    </location>
</feature>
<feature type="chain" id="PRO_0000008744" description="Pseudokinase FAM20A">
    <location>
        <begin position="34"/>
        <end position="541"/>
    </location>
</feature>
<feature type="glycosylation site" description="N-linked (GlcNAc...) asparagine" evidence="2">
    <location>
        <position position="70"/>
    </location>
</feature>
<feature type="glycosylation site" description="N-linked (GlcNAc...) asparagine" evidence="2">
    <location>
        <position position="145"/>
    </location>
</feature>
<feature type="glycosylation site" description="N-linked (GlcNAc...) asparagine" evidence="2">
    <location>
        <position position="287"/>
    </location>
</feature>
<feature type="glycosylation site" description="N-linked (GlcNAc...) asparagine" evidence="2">
    <location>
        <position position="388"/>
    </location>
</feature>
<feature type="glycosylation site" description="N-linked (GlcNAc...) asparagine" evidence="2">
    <location>
        <position position="538"/>
    </location>
</feature>
<feature type="disulfide bond" evidence="1">
    <location>
        <begin position="314"/>
        <end position="330"/>
    </location>
</feature>
<feature type="disulfide bond" evidence="1">
    <location>
        <begin position="319"/>
        <end position="323"/>
    </location>
</feature>
<feature type="disulfide bond" evidence="1">
    <location>
        <begin position="378"/>
        <end position="452"/>
    </location>
</feature>
<feature type="disulfide bond" evidence="1">
    <location>
        <begin position="453"/>
        <end position="512"/>
    </location>
</feature>
<feature type="mutagenesis site" description="Not secreted; nuclear localization." evidence="3">
    <original>LL</original>
    <variation>DE</variation>
    <location>
        <begin position="14"/>
        <end position="15"/>
    </location>
</feature>
<name>FA20A_MOUSE</name>
<sequence>MPGLRRDRLLALLLLGALFSADLYFHLWPQVQRQLRPGERPAACPCSGRAPSASLHSAAASRDLGTASHNFSGALPRVEHPSRGHPAPRSKLQALFAHSLYQVLEDPPLLGPEDWLLASQEALRYYRRKVARWNRRHKIYKEQFNLTSLDPPLQFRPEASWVQFHLGINSHGLYSRSSLAISKLLHDMRHFPTISADYSQDEKALLGACDCSQIVKPSGVHLKLVLRFSDFGKAMFKPMRQQREEETPEDFFYFIDFQRHNAEIAAFHLDRILDFRRVPPTVGRLVNVTKEILEVTKNEILQSVFFVSPANNVCFFAKCPYMCKTEYAVCGNPHLLEGSLSAFLPSLNLAPRLSVPNPWIRSYSLSGKEEWELNPLYCDTVKQIYPYNSSNRLLGIIDMAVFDFLIGNMDRHHYEMFTKFGDDGYLIHLDNARGFGRHSQDEISILAPLAQCCMIKRKTLLHLQLLAQADYRLSDVMRESLLEDQLSPVLTEPHLLALDRRLQIILKTVEDCIEAHGERRVIAEGSAQRSAPDSGQANLTS</sequence>
<gene>
    <name evidence="10" type="primary">Fam20a</name>
</gene>
<reference key="1">
    <citation type="journal article" date="2004" name="Genome Res.">
        <title>The status, quality, and expansion of the NIH full-length cDNA project: the Mammalian Gene Collection (MGC).</title>
        <authorList>
            <consortium name="The MGC Project Team"/>
        </authorList>
    </citation>
    <scope>NUCLEOTIDE SEQUENCE [LARGE SCALE MRNA]</scope>
    <source>
        <strain>FVB/N</strain>
    </source>
</reference>
<reference key="2">
    <citation type="journal article" date="2005" name="BMC Genomics">
        <title>FAM20: an evolutionarily conserved family of secreted proteins expressed in hematopoietic cells.</title>
        <authorList>
            <person name="Nalbant D."/>
            <person name="Youn H."/>
            <person name="Nalbant S.I."/>
            <person name="Sharma S."/>
            <person name="Cobos E."/>
            <person name="Beale E.G."/>
            <person name="Du Y."/>
            <person name="Williams S.C."/>
        </authorList>
    </citation>
    <scope>SUBCELLULAR LOCATION</scope>
    <scope>GLYCOSYLATION</scope>
    <scope>DEVELOPMENTAL STAGE</scope>
    <scope>INDUCTION</scope>
    <scope>MUTAGENESIS OF 14-LEU-LEU-15</scope>
</reference>
<reference key="3">
    <citation type="journal article" date="2011" name="Am. J. Hum. Genet.">
        <title>Whole-exome sequencing identifies FAM20A mutations as a cause of amelogenesis imperfecta and gingival hyperplasia syndrome.</title>
        <authorList>
            <person name="O'Sullivan J."/>
            <person name="Bitu C.C."/>
            <person name="Daly S.B."/>
            <person name="Urquhart J.E."/>
            <person name="Barron M.J."/>
            <person name="Bhaskar S.S."/>
            <person name="Martelli-Junior H."/>
            <person name="dos Santos Neto P.E."/>
            <person name="Mansilla M.A."/>
            <person name="Murray J.C."/>
            <person name="Coletta R.D."/>
            <person name="Black G.C."/>
            <person name="Dixon M.J."/>
        </authorList>
    </citation>
    <scope>TISSUE SPECIFICITY</scope>
</reference>
<reference key="4">
    <citation type="journal article" date="2012" name="PLoS ONE">
        <title>The Raine syndrome protein FAM20C is a Golgi kinase that phosphorylates bio-mineralization proteins.</title>
        <authorList>
            <person name="Ishikawa H.O."/>
            <person name="Xu A."/>
            <person name="Ogura E."/>
            <person name="Manning G."/>
            <person name="Irvine K.D."/>
        </authorList>
    </citation>
    <scope>SUBCELLULAR LOCATION</scope>
</reference>
<reference key="5">
    <citation type="journal article" date="2012" name="Vet. Pathol.">
        <title>Amelogenesis imperfecta and other biomineralization defects in Fam20a and Fam20c null mice.</title>
        <authorList>
            <person name="Vogel P."/>
            <person name="Hansen G.M."/>
            <person name="Read R.W."/>
            <person name="Vance R.B."/>
            <person name="Thiel M."/>
            <person name="Liu J."/>
            <person name="Wronski T.J."/>
            <person name="Smith D.D."/>
            <person name="Jeter-Jones S."/>
            <person name="Brommage R."/>
        </authorList>
    </citation>
    <scope>FUNCTION</scope>
    <scope>DISRUPTION PHENOTYPE</scope>
    <scope>TISSUE SPECIFICITY</scope>
</reference>
<reference key="6">
    <citation type="journal article" date="2015" name="Elife">
        <title>A secretory kinase complex regulates extracellular protein phosphorylation.</title>
        <authorList>
            <person name="Cui J."/>
            <person name="Xiao J."/>
            <person name="Tagliabracci V.S."/>
            <person name="Wen J."/>
            <person name="Rahdar M."/>
            <person name="Dixon J.E."/>
        </authorList>
    </citation>
    <scope>FUNCTION</scope>
    <scope>INTERACTION WITH FAM20C</scope>
</reference>
<reference key="7">
    <citation type="journal article" date="2018" name="EMBO J.">
        <title>Secretory kinase Fam20C tunes endoplasmic reticulum redox state via phosphorylation of Ero1alpha.</title>
        <authorList>
            <person name="Zhang J."/>
            <person name="Zhu Q."/>
            <person name="Wang X."/>
            <person name="Yu J."/>
            <person name="Chen X."/>
            <person name="Wang J."/>
            <person name="Wang X."/>
            <person name="Xiao J."/>
            <person name="Wang C.C."/>
            <person name="Wang L."/>
        </authorList>
    </citation>
    <scope>TISSUE SPECIFICITY</scope>
</reference>
<organism>
    <name type="scientific">Mus musculus</name>
    <name type="common">Mouse</name>
    <dbReference type="NCBI Taxonomy" id="10090"/>
    <lineage>
        <taxon>Eukaryota</taxon>
        <taxon>Metazoa</taxon>
        <taxon>Chordata</taxon>
        <taxon>Craniata</taxon>
        <taxon>Vertebrata</taxon>
        <taxon>Euteleostomi</taxon>
        <taxon>Mammalia</taxon>
        <taxon>Eutheria</taxon>
        <taxon>Euarchontoglires</taxon>
        <taxon>Glires</taxon>
        <taxon>Rodentia</taxon>
        <taxon>Myomorpha</taxon>
        <taxon>Muroidea</taxon>
        <taxon>Muridae</taxon>
        <taxon>Murinae</taxon>
        <taxon>Mus</taxon>
        <taxon>Mus</taxon>
    </lineage>
</organism>